<protein>
    <recommendedName>
        <fullName evidence="4">Bactridin-2</fullName>
        <shortName evidence="4">Bact2</shortName>
        <shortName evidence="4">Bactridine 2</shortName>
    </recommendedName>
    <alternativeName>
        <fullName>P-Mice-Antm-beta* NaTx14.8</fullName>
    </alternativeName>
</protein>
<dbReference type="SMR" id="P0CF37"/>
<dbReference type="GO" id="GO:0005576">
    <property type="term" value="C:extracellular region"/>
    <property type="evidence" value="ECO:0007669"/>
    <property type="project" value="UniProtKB-SubCell"/>
</dbReference>
<dbReference type="GO" id="GO:0019871">
    <property type="term" value="F:sodium channel inhibitor activity"/>
    <property type="evidence" value="ECO:0007669"/>
    <property type="project" value="InterPro"/>
</dbReference>
<dbReference type="GO" id="GO:0090729">
    <property type="term" value="F:toxin activity"/>
    <property type="evidence" value="ECO:0007669"/>
    <property type="project" value="UniProtKB-KW"/>
</dbReference>
<dbReference type="GO" id="GO:0042742">
    <property type="term" value="P:defense response to bacterium"/>
    <property type="evidence" value="ECO:0007669"/>
    <property type="project" value="UniProtKB-KW"/>
</dbReference>
<dbReference type="GO" id="GO:0031640">
    <property type="term" value="P:killing of cells of another organism"/>
    <property type="evidence" value="ECO:0007669"/>
    <property type="project" value="UniProtKB-KW"/>
</dbReference>
<dbReference type="CDD" id="cd23106">
    <property type="entry name" value="neurotoxins_LC_scorpion"/>
    <property type="match status" value="1"/>
</dbReference>
<dbReference type="FunFam" id="3.30.30.10:FF:000002">
    <property type="entry name" value="Alpha-like toxin BmK-M1"/>
    <property type="match status" value="1"/>
</dbReference>
<dbReference type="Gene3D" id="3.30.30.10">
    <property type="entry name" value="Knottin, scorpion toxin-like"/>
    <property type="match status" value="1"/>
</dbReference>
<dbReference type="InterPro" id="IPR044062">
    <property type="entry name" value="LCN-type_CS_alpha_beta_dom"/>
</dbReference>
<dbReference type="InterPro" id="IPR003614">
    <property type="entry name" value="Scorpion_toxin-like"/>
</dbReference>
<dbReference type="InterPro" id="IPR036574">
    <property type="entry name" value="Scorpion_toxin-like_sf"/>
</dbReference>
<dbReference type="InterPro" id="IPR018218">
    <property type="entry name" value="Scorpion_toxinL"/>
</dbReference>
<dbReference type="InterPro" id="IPR002061">
    <property type="entry name" value="Scorpion_toxinL/defensin"/>
</dbReference>
<dbReference type="Pfam" id="PF00537">
    <property type="entry name" value="Toxin_3"/>
    <property type="match status" value="1"/>
</dbReference>
<dbReference type="PRINTS" id="PR00285">
    <property type="entry name" value="SCORPNTOXIN"/>
</dbReference>
<dbReference type="SMART" id="SM00505">
    <property type="entry name" value="Knot1"/>
    <property type="match status" value="1"/>
</dbReference>
<dbReference type="SUPFAM" id="SSF57095">
    <property type="entry name" value="Scorpion toxin-like"/>
    <property type="match status" value="1"/>
</dbReference>
<dbReference type="PROSITE" id="PS51863">
    <property type="entry name" value="LCN_CSAB"/>
    <property type="match status" value="1"/>
</dbReference>
<keyword id="KW-0044">Antibiotic</keyword>
<keyword id="KW-0929">Antimicrobial</keyword>
<keyword id="KW-0204">Cytolysis</keyword>
<keyword id="KW-0903">Direct protein sequencing</keyword>
<keyword id="KW-1015">Disulfide bond</keyword>
<keyword id="KW-0354">Hemolysis</keyword>
<keyword id="KW-0872">Ion channel impairing toxin</keyword>
<keyword id="KW-0528">Neurotoxin</keyword>
<keyword id="KW-0964">Secreted</keyword>
<keyword id="KW-0800">Toxin</keyword>
<keyword id="KW-0738">Voltage-gated sodium channel impairing toxin</keyword>
<accession>P0CF37</accession>
<sequence>KDGYLVGNDGCKYSCFTRPGTYCANECSRVKGKDGYCYAWMACYCYSMPNWVKTWNRATNRCGR</sequence>
<organism>
    <name type="scientific">Tityus discrepans</name>
    <name type="common">Venezuelan scorpion</name>
    <dbReference type="NCBI Taxonomy" id="57059"/>
    <lineage>
        <taxon>Eukaryota</taxon>
        <taxon>Metazoa</taxon>
        <taxon>Ecdysozoa</taxon>
        <taxon>Arthropoda</taxon>
        <taxon>Chelicerata</taxon>
        <taxon>Arachnida</taxon>
        <taxon>Scorpiones</taxon>
        <taxon>Buthida</taxon>
        <taxon>Buthoidea</taxon>
        <taxon>Buthidae</taxon>
        <taxon>Tityus</taxon>
    </lineage>
</organism>
<reference key="1">
    <citation type="journal article" date="2009" name="Toxicon">
        <title>Antibacterial activity of six novel peptides from Tityus discrepans scorpion venom. A fluorescent probe study of microbial membrane Na+ permeability changes.</title>
        <authorList>
            <person name="Diaz P."/>
            <person name="D'Suze G."/>
            <person name="Salazar V."/>
            <person name="Sevcik C."/>
            <person name="Shannon J.D."/>
            <person name="Sherman N.E."/>
            <person name="Fox J.W."/>
        </authorList>
    </citation>
    <scope>PROTEIN SEQUENCE</scope>
    <scope>FUNCTION</scope>
    <scope>SUBCELLULAR LOCATION</scope>
    <scope>MASS SPECTROMETRY</scope>
    <source>
        <tissue>Venom</tissue>
    </source>
</reference>
<reference key="2">
    <citation type="journal article" date="2012" name="PLoS ONE">
        <title>Identification and phylogenetic analysis of Tityus pachyurus and Tityus obscurus novel putative Na+-channel scorpion toxins.</title>
        <authorList>
            <person name="Guerrero-Vargas J.A."/>
            <person name="Mourao C.B."/>
            <person name="Quintero-Hernandez V."/>
            <person name="Possani L.D."/>
            <person name="Schwartz E.F."/>
        </authorList>
    </citation>
    <scope>NOMENCLATURE</scope>
</reference>
<name>AMP2_TITDI</name>
<proteinExistence type="evidence at protein level"/>
<evidence type="ECO:0000250" key="1">
    <source>
        <dbReference type="UniProtKB" id="P0C1X7"/>
    </source>
</evidence>
<evidence type="ECO:0000255" key="2">
    <source>
        <dbReference type="PROSITE-ProRule" id="PRU01210"/>
    </source>
</evidence>
<evidence type="ECO:0000269" key="3">
    <source>
    </source>
</evidence>
<evidence type="ECO:0000303" key="4">
    <source>
    </source>
</evidence>
<evidence type="ECO:0000305" key="5"/>
<comment type="function">
    <text evidence="1 3">Shows antibacterial activity against both Gram-positive bacteria (B.subtilis, M.luteus, E.faecalis) and Gram-negative bacteria (P.aeruginosa, Y.enterocolitica, A.calcoaceticus). Modifies membrane sodium permeability on Y.enterocolitica. Is toxic to mice, but is not to crabs. Induces concentration dependent haemolysis in human erythrocytes (PubMed:19540868). Acts by inhibiting the sodium (Nav) currents (By similarity).</text>
</comment>
<comment type="subcellular location">
    <subcellularLocation>
        <location evidence="3">Secreted</location>
    </subcellularLocation>
</comment>
<comment type="tissue specificity">
    <text evidence="3">Expressed by the venom gland.</text>
</comment>
<comment type="domain">
    <text evidence="5">Has the structural arrangement of an alpha-helix connected to antiparallel beta-sheets by disulfide bonds (CS-alpha/beta).</text>
</comment>
<comment type="mass spectrometry">
    <text>Monoisotopic.</text>
</comment>
<comment type="similarity">
    <text evidence="5">Belongs to the long (4 C-C) scorpion toxin superfamily. Sodium channel inhibitor family. Beta subfamily.</text>
</comment>
<feature type="chain" id="PRO_0000393445" description="Bactridin-2" evidence="3">
    <location>
        <begin position="1"/>
        <end position="64"/>
    </location>
</feature>
<feature type="domain" description="LCN-type CS-alpha/beta" evidence="2">
    <location>
        <begin position="1"/>
        <end position="63"/>
    </location>
</feature>
<feature type="disulfide bond" evidence="2">
    <location>
        <begin position="11"/>
        <end position="62"/>
    </location>
</feature>
<feature type="disulfide bond" evidence="2">
    <location>
        <begin position="15"/>
        <end position="37"/>
    </location>
</feature>
<feature type="disulfide bond" evidence="2">
    <location>
        <begin position="23"/>
        <end position="43"/>
    </location>
</feature>
<feature type="disulfide bond" evidence="2">
    <location>
        <begin position="27"/>
        <end position="45"/>
    </location>
</feature>
<feature type="unsure residue">
    <location>
        <position position="64"/>
    </location>
</feature>